<accession>A7GXG2</accession>
<dbReference type="EC" id="4.2.1.19" evidence="1"/>
<dbReference type="EMBL" id="CP000767">
    <property type="protein sequence ID" value="EAU00702.1"/>
    <property type="molecule type" value="Genomic_DNA"/>
</dbReference>
<dbReference type="SMR" id="A7GXG2"/>
<dbReference type="STRING" id="360105.CCV52592_0457"/>
<dbReference type="KEGG" id="ccv:CCV52592_0457"/>
<dbReference type="HOGENOM" id="CLU_044308_3_0_7"/>
<dbReference type="OrthoDB" id="9790411at2"/>
<dbReference type="UniPathway" id="UPA00031">
    <property type="reaction ID" value="UER00011"/>
</dbReference>
<dbReference type="Proteomes" id="UP000006380">
    <property type="component" value="Chromosome"/>
</dbReference>
<dbReference type="GO" id="GO:0005737">
    <property type="term" value="C:cytoplasm"/>
    <property type="evidence" value="ECO:0007669"/>
    <property type="project" value="UniProtKB-SubCell"/>
</dbReference>
<dbReference type="GO" id="GO:0004424">
    <property type="term" value="F:imidazoleglycerol-phosphate dehydratase activity"/>
    <property type="evidence" value="ECO:0007669"/>
    <property type="project" value="UniProtKB-UniRule"/>
</dbReference>
<dbReference type="GO" id="GO:0000105">
    <property type="term" value="P:L-histidine biosynthetic process"/>
    <property type="evidence" value="ECO:0007669"/>
    <property type="project" value="UniProtKB-UniRule"/>
</dbReference>
<dbReference type="CDD" id="cd07914">
    <property type="entry name" value="IGPD"/>
    <property type="match status" value="1"/>
</dbReference>
<dbReference type="FunFam" id="3.30.230.40:FF:000001">
    <property type="entry name" value="Imidazoleglycerol-phosphate dehydratase HisB"/>
    <property type="match status" value="1"/>
</dbReference>
<dbReference type="FunFam" id="3.30.230.40:FF:000003">
    <property type="entry name" value="Imidazoleglycerol-phosphate dehydratase HisB"/>
    <property type="match status" value="1"/>
</dbReference>
<dbReference type="Gene3D" id="3.30.230.40">
    <property type="entry name" value="Imidazole glycerol phosphate dehydratase, domain 1"/>
    <property type="match status" value="2"/>
</dbReference>
<dbReference type="HAMAP" id="MF_00076">
    <property type="entry name" value="HisB"/>
    <property type="match status" value="1"/>
</dbReference>
<dbReference type="InterPro" id="IPR038494">
    <property type="entry name" value="IGPD_sf"/>
</dbReference>
<dbReference type="InterPro" id="IPR000807">
    <property type="entry name" value="ImidazoleglycerolP_deHydtase"/>
</dbReference>
<dbReference type="InterPro" id="IPR020565">
    <property type="entry name" value="ImidazoleglycerP_deHydtase_CS"/>
</dbReference>
<dbReference type="InterPro" id="IPR020568">
    <property type="entry name" value="Ribosomal_Su5_D2-typ_SF"/>
</dbReference>
<dbReference type="NCBIfam" id="NF002111">
    <property type="entry name" value="PRK00951.2-1"/>
    <property type="match status" value="1"/>
</dbReference>
<dbReference type="NCBIfam" id="NF002114">
    <property type="entry name" value="PRK00951.2-4"/>
    <property type="match status" value="1"/>
</dbReference>
<dbReference type="PANTHER" id="PTHR23133:SF2">
    <property type="entry name" value="IMIDAZOLEGLYCEROL-PHOSPHATE DEHYDRATASE"/>
    <property type="match status" value="1"/>
</dbReference>
<dbReference type="PANTHER" id="PTHR23133">
    <property type="entry name" value="IMIDAZOLEGLYCEROL-PHOSPHATE DEHYDRATASE HIS7"/>
    <property type="match status" value="1"/>
</dbReference>
<dbReference type="Pfam" id="PF00475">
    <property type="entry name" value="IGPD"/>
    <property type="match status" value="1"/>
</dbReference>
<dbReference type="SUPFAM" id="SSF54211">
    <property type="entry name" value="Ribosomal protein S5 domain 2-like"/>
    <property type="match status" value="2"/>
</dbReference>
<dbReference type="PROSITE" id="PS00954">
    <property type="entry name" value="IGP_DEHYDRATASE_1"/>
    <property type="match status" value="1"/>
</dbReference>
<dbReference type="PROSITE" id="PS00955">
    <property type="entry name" value="IGP_DEHYDRATASE_2"/>
    <property type="match status" value="1"/>
</dbReference>
<sequence>MKDKILKIVRTTKETDISAELKIYGEGRCEIATGVGFFDHMLEAFGKHALLDMKISCKGDTHVDFHHSVEDVGIVIGTLLKEAIYPVSGIERFGDSVVVMDEAAVSCALDLSNRAFLVYENFNEKGKVGEFDIELAEEFFRAVSMNANITLHIAKLRGRNNHHIIEAAFKSFAVALRRALAKNPRVNTPSTKGVL</sequence>
<organism>
    <name type="scientific">Campylobacter curvus (strain 525.92)</name>
    <dbReference type="NCBI Taxonomy" id="360105"/>
    <lineage>
        <taxon>Bacteria</taxon>
        <taxon>Pseudomonadati</taxon>
        <taxon>Campylobacterota</taxon>
        <taxon>Epsilonproteobacteria</taxon>
        <taxon>Campylobacterales</taxon>
        <taxon>Campylobacteraceae</taxon>
        <taxon>Campylobacter</taxon>
    </lineage>
</organism>
<evidence type="ECO:0000255" key="1">
    <source>
        <dbReference type="HAMAP-Rule" id="MF_00076"/>
    </source>
</evidence>
<keyword id="KW-0028">Amino-acid biosynthesis</keyword>
<keyword id="KW-0963">Cytoplasm</keyword>
<keyword id="KW-0368">Histidine biosynthesis</keyword>
<keyword id="KW-0456">Lyase</keyword>
<keyword id="KW-1185">Reference proteome</keyword>
<feature type="chain" id="PRO_0000336300" description="Imidazoleglycerol-phosphate dehydratase">
    <location>
        <begin position="1"/>
        <end position="195"/>
    </location>
</feature>
<gene>
    <name evidence="1" type="primary">hisB</name>
    <name type="ordered locus">Ccur92_06000</name>
    <name type="ORF">CCV52592_0457</name>
</gene>
<protein>
    <recommendedName>
        <fullName evidence="1">Imidazoleglycerol-phosphate dehydratase</fullName>
        <shortName evidence="1">IGPD</shortName>
        <ecNumber evidence="1">4.2.1.19</ecNumber>
    </recommendedName>
</protein>
<proteinExistence type="inferred from homology"/>
<comment type="catalytic activity">
    <reaction evidence="1">
        <text>D-erythro-1-(imidazol-4-yl)glycerol 3-phosphate = 3-(imidazol-4-yl)-2-oxopropyl phosphate + H2O</text>
        <dbReference type="Rhea" id="RHEA:11040"/>
        <dbReference type="ChEBI" id="CHEBI:15377"/>
        <dbReference type="ChEBI" id="CHEBI:57766"/>
        <dbReference type="ChEBI" id="CHEBI:58278"/>
        <dbReference type="EC" id="4.2.1.19"/>
    </reaction>
</comment>
<comment type="pathway">
    <text evidence="1">Amino-acid biosynthesis; L-histidine biosynthesis; L-histidine from 5-phospho-alpha-D-ribose 1-diphosphate: step 6/9.</text>
</comment>
<comment type="subcellular location">
    <subcellularLocation>
        <location evidence="1">Cytoplasm</location>
    </subcellularLocation>
</comment>
<comment type="similarity">
    <text evidence="1">Belongs to the imidazoleglycerol-phosphate dehydratase family.</text>
</comment>
<name>HIS7_CAMC5</name>
<reference key="1">
    <citation type="submission" date="2007-07" db="EMBL/GenBank/DDBJ databases">
        <title>Genome sequence of Campylobacter curvus 525.92 isolated from human feces.</title>
        <authorList>
            <person name="Fouts D.E."/>
            <person name="Mongodin E.F."/>
            <person name="Puiu D."/>
            <person name="Sebastian Y."/>
            <person name="Miller W.G."/>
            <person name="Mandrell R.E."/>
            <person name="Lastovica A.J."/>
            <person name="Nelson K.E."/>
        </authorList>
    </citation>
    <scope>NUCLEOTIDE SEQUENCE [LARGE SCALE GENOMIC DNA]</scope>
    <source>
        <strain>525.92</strain>
    </source>
</reference>